<name>YNAX_KLEAE</name>
<sequence length="89" mass="10198">IPVSRPCGPMPAICCSKPISGGFTITTMTRGRMSGWSWLSAPGWRNICNERSLSPSVRNWFRLRRAHNISDITFYEVLREIDLKEESLR</sequence>
<dbReference type="EMBL" id="L01114">
    <property type="protein sequence ID" value="AAA18172.1"/>
    <property type="molecule type" value="Genomic_DNA"/>
</dbReference>
<proteinExistence type="predicted"/>
<reference key="1">
    <citation type="journal article" date="1993" name="J. Bacteriol.">
        <title>The nac (nitrogen assimilation control) gene from Klebsiella aerogenes.</title>
        <authorList>
            <person name="Schwacha A."/>
            <person name="Bender R.A."/>
        </authorList>
    </citation>
    <scope>NUCLEOTIDE SEQUENCE [GENOMIC DNA]</scope>
    <source>
        <strain>W70 / KC1043</strain>
    </source>
</reference>
<protein>
    <recommendedName>
        <fullName>Uncharacterized protein in nac 5'region</fullName>
    </recommendedName>
    <alternativeName>
        <fullName>ORF X</fullName>
    </alternativeName>
</protein>
<feature type="chain" id="PRO_0000066317" description="Uncharacterized protein in nac 5'region">
    <location>
        <begin position="1" status="less than"/>
        <end position="89"/>
    </location>
</feature>
<feature type="non-terminal residue">
    <location>
        <position position="1"/>
    </location>
</feature>
<accession>Q08600</accession>
<organism>
    <name type="scientific">Klebsiella aerogenes</name>
    <name type="common">Enterobacter aerogenes</name>
    <dbReference type="NCBI Taxonomy" id="548"/>
    <lineage>
        <taxon>Bacteria</taxon>
        <taxon>Pseudomonadati</taxon>
        <taxon>Pseudomonadota</taxon>
        <taxon>Gammaproteobacteria</taxon>
        <taxon>Enterobacterales</taxon>
        <taxon>Enterobacteriaceae</taxon>
        <taxon>Klebsiella/Raoultella group</taxon>
        <taxon>Klebsiella</taxon>
    </lineage>
</organism>